<protein>
    <recommendedName>
        <fullName evidence="1">Large ribosomal subunit protein uL5</fullName>
    </recommendedName>
    <alternativeName>
        <fullName evidence="2">50S ribosomal protein L5</fullName>
    </alternativeName>
</protein>
<gene>
    <name evidence="1" type="primary">rplE</name>
    <name type="ordered locus">Bphy_2827</name>
</gene>
<feature type="chain" id="PRO_1000142367" description="Large ribosomal subunit protein uL5">
    <location>
        <begin position="1"/>
        <end position="179"/>
    </location>
</feature>
<dbReference type="EMBL" id="CP001043">
    <property type="protein sequence ID" value="ACC71999.1"/>
    <property type="molecule type" value="Genomic_DNA"/>
</dbReference>
<dbReference type="RefSeq" id="WP_006052214.1">
    <property type="nucleotide sequence ID" value="NZ_CADFGH010000028.1"/>
</dbReference>
<dbReference type="SMR" id="B2JI53"/>
<dbReference type="STRING" id="391038.Bphy_2827"/>
<dbReference type="GeneID" id="97311004"/>
<dbReference type="KEGG" id="bph:Bphy_2827"/>
<dbReference type="eggNOG" id="COG0094">
    <property type="taxonomic scope" value="Bacteria"/>
</dbReference>
<dbReference type="HOGENOM" id="CLU_061015_2_1_4"/>
<dbReference type="OrthoDB" id="9806626at2"/>
<dbReference type="Proteomes" id="UP000001192">
    <property type="component" value="Chromosome 1"/>
</dbReference>
<dbReference type="GO" id="GO:1990904">
    <property type="term" value="C:ribonucleoprotein complex"/>
    <property type="evidence" value="ECO:0007669"/>
    <property type="project" value="UniProtKB-KW"/>
</dbReference>
<dbReference type="GO" id="GO:0005840">
    <property type="term" value="C:ribosome"/>
    <property type="evidence" value="ECO:0007669"/>
    <property type="project" value="UniProtKB-KW"/>
</dbReference>
<dbReference type="GO" id="GO:0019843">
    <property type="term" value="F:rRNA binding"/>
    <property type="evidence" value="ECO:0007669"/>
    <property type="project" value="UniProtKB-UniRule"/>
</dbReference>
<dbReference type="GO" id="GO:0003735">
    <property type="term" value="F:structural constituent of ribosome"/>
    <property type="evidence" value="ECO:0007669"/>
    <property type="project" value="InterPro"/>
</dbReference>
<dbReference type="GO" id="GO:0000049">
    <property type="term" value="F:tRNA binding"/>
    <property type="evidence" value="ECO:0007669"/>
    <property type="project" value="UniProtKB-UniRule"/>
</dbReference>
<dbReference type="GO" id="GO:0006412">
    <property type="term" value="P:translation"/>
    <property type="evidence" value="ECO:0007669"/>
    <property type="project" value="UniProtKB-UniRule"/>
</dbReference>
<dbReference type="FunFam" id="3.30.1440.10:FF:000001">
    <property type="entry name" value="50S ribosomal protein L5"/>
    <property type="match status" value="1"/>
</dbReference>
<dbReference type="Gene3D" id="3.30.1440.10">
    <property type="match status" value="1"/>
</dbReference>
<dbReference type="HAMAP" id="MF_01333_B">
    <property type="entry name" value="Ribosomal_uL5_B"/>
    <property type="match status" value="1"/>
</dbReference>
<dbReference type="InterPro" id="IPR002132">
    <property type="entry name" value="Ribosomal_uL5"/>
</dbReference>
<dbReference type="InterPro" id="IPR020930">
    <property type="entry name" value="Ribosomal_uL5_bac-type"/>
</dbReference>
<dbReference type="InterPro" id="IPR031309">
    <property type="entry name" value="Ribosomal_uL5_C"/>
</dbReference>
<dbReference type="InterPro" id="IPR020929">
    <property type="entry name" value="Ribosomal_uL5_CS"/>
</dbReference>
<dbReference type="InterPro" id="IPR022803">
    <property type="entry name" value="Ribosomal_uL5_dom_sf"/>
</dbReference>
<dbReference type="InterPro" id="IPR031310">
    <property type="entry name" value="Ribosomal_uL5_N"/>
</dbReference>
<dbReference type="NCBIfam" id="NF000585">
    <property type="entry name" value="PRK00010.1"/>
    <property type="match status" value="1"/>
</dbReference>
<dbReference type="PANTHER" id="PTHR11994">
    <property type="entry name" value="60S RIBOSOMAL PROTEIN L11-RELATED"/>
    <property type="match status" value="1"/>
</dbReference>
<dbReference type="Pfam" id="PF00281">
    <property type="entry name" value="Ribosomal_L5"/>
    <property type="match status" value="1"/>
</dbReference>
<dbReference type="Pfam" id="PF00673">
    <property type="entry name" value="Ribosomal_L5_C"/>
    <property type="match status" value="1"/>
</dbReference>
<dbReference type="PIRSF" id="PIRSF002161">
    <property type="entry name" value="Ribosomal_L5"/>
    <property type="match status" value="1"/>
</dbReference>
<dbReference type="SUPFAM" id="SSF55282">
    <property type="entry name" value="RL5-like"/>
    <property type="match status" value="1"/>
</dbReference>
<dbReference type="PROSITE" id="PS00358">
    <property type="entry name" value="RIBOSOMAL_L5"/>
    <property type="match status" value="1"/>
</dbReference>
<proteinExistence type="inferred from homology"/>
<evidence type="ECO:0000255" key="1">
    <source>
        <dbReference type="HAMAP-Rule" id="MF_01333"/>
    </source>
</evidence>
<evidence type="ECO:0000305" key="2"/>
<name>RL5_PARP8</name>
<accession>B2JI53</accession>
<organism>
    <name type="scientific">Paraburkholderia phymatum (strain DSM 17167 / CIP 108236 / LMG 21445 / STM815)</name>
    <name type="common">Burkholderia phymatum</name>
    <dbReference type="NCBI Taxonomy" id="391038"/>
    <lineage>
        <taxon>Bacteria</taxon>
        <taxon>Pseudomonadati</taxon>
        <taxon>Pseudomonadota</taxon>
        <taxon>Betaproteobacteria</taxon>
        <taxon>Burkholderiales</taxon>
        <taxon>Burkholderiaceae</taxon>
        <taxon>Paraburkholderia</taxon>
    </lineage>
</organism>
<reference key="1">
    <citation type="journal article" date="2014" name="Stand. Genomic Sci.">
        <title>Complete genome sequence of Burkholderia phymatum STM815(T), a broad host range and efficient nitrogen-fixing symbiont of Mimosa species.</title>
        <authorList>
            <person name="Moulin L."/>
            <person name="Klonowska A."/>
            <person name="Caroline B."/>
            <person name="Booth K."/>
            <person name="Vriezen J.A."/>
            <person name="Melkonian R."/>
            <person name="James E.K."/>
            <person name="Young J.P."/>
            <person name="Bena G."/>
            <person name="Hauser L."/>
            <person name="Land M."/>
            <person name="Kyrpides N."/>
            <person name="Bruce D."/>
            <person name="Chain P."/>
            <person name="Copeland A."/>
            <person name="Pitluck S."/>
            <person name="Woyke T."/>
            <person name="Lizotte-Waniewski M."/>
            <person name="Bristow J."/>
            <person name="Riley M."/>
        </authorList>
    </citation>
    <scope>NUCLEOTIDE SEQUENCE [LARGE SCALE GENOMIC DNA]</scope>
    <source>
        <strain>DSM 17167 / CIP 108236 / LMG 21445 / STM815</strain>
    </source>
</reference>
<keyword id="KW-1185">Reference proteome</keyword>
<keyword id="KW-0687">Ribonucleoprotein</keyword>
<keyword id="KW-0689">Ribosomal protein</keyword>
<keyword id="KW-0694">RNA-binding</keyword>
<keyword id="KW-0699">rRNA-binding</keyword>
<keyword id="KW-0820">tRNA-binding</keyword>
<sequence>MARLQEFYKEKVVPGLIEKFGYKSVMEVPRITKITLNMGLGEAVADKKIIENAVGDLTKIAGQKPVITKARKAIAGFKIRQGYPIGAMVTLRGQAMYEFLDRFVTVALPRVRDFRGVSGRAFDGRGNYNIGVKEQIIFPEIDYDKIDALRGLNISITTTAKTDDEAKALLASFKFPFRN</sequence>
<comment type="function">
    <text evidence="1">This is one of the proteins that bind and probably mediate the attachment of the 5S RNA into the large ribosomal subunit, where it forms part of the central protuberance. In the 70S ribosome it contacts protein S13 of the 30S subunit (bridge B1b), connecting the 2 subunits; this bridge is implicated in subunit movement. Contacts the P site tRNA; the 5S rRNA and some of its associated proteins might help stabilize positioning of ribosome-bound tRNAs.</text>
</comment>
<comment type="subunit">
    <text evidence="1">Part of the 50S ribosomal subunit; part of the 5S rRNA/L5/L18/L25 subcomplex. Contacts the 5S rRNA and the P site tRNA. Forms a bridge to the 30S subunit in the 70S ribosome.</text>
</comment>
<comment type="similarity">
    <text evidence="1">Belongs to the universal ribosomal protein uL5 family.</text>
</comment>